<organism>
    <name type="scientific">Saccharomyces cerevisiae (strain ATCC 204508 / S288c)</name>
    <name type="common">Baker's yeast</name>
    <dbReference type="NCBI Taxonomy" id="559292"/>
    <lineage>
        <taxon>Eukaryota</taxon>
        <taxon>Fungi</taxon>
        <taxon>Dikarya</taxon>
        <taxon>Ascomycota</taxon>
        <taxon>Saccharomycotina</taxon>
        <taxon>Saccharomycetes</taxon>
        <taxon>Saccharomycetales</taxon>
        <taxon>Saccharomycetaceae</taxon>
        <taxon>Saccharomyces</taxon>
    </lineage>
</organism>
<comment type="function">
    <text evidence="4">The complex LTO1:YAE1 functions as a target specific adapter that recruits apo-RLI1 to the cytosolic iron-sulfur protein assembly (CIA) complex machinery.</text>
</comment>
<comment type="subunit">
    <text evidence="3 4">Forms a complex with LTO1; the complex bridges the interaction between the CIA complex and RLI1 (PubMed:23318452, PubMed:26182403). Interacts with RLI1 (PubMed:23318452, PubMed:26182403).</text>
</comment>
<comment type="interaction">
    <interactant intactId="EBI-25522">
        <id>P47118</id>
    </interactant>
    <interactant intactId="EBI-28226">
        <id>P53846</id>
        <label>LTO1</label>
    </interactant>
    <organismsDiffer>false</organismsDiffer>
    <experiments>5</experiments>
</comment>
<comment type="interaction">
    <interactant intactId="EBI-25522">
        <id>P47118</id>
    </interactant>
    <interactant intactId="EBI-35146">
        <id>Q03195</id>
        <label>RLI1</label>
    </interactant>
    <organismsDiffer>false</organismsDiffer>
    <experiments>2</experiments>
</comment>
<comment type="subcellular location">
    <subcellularLocation>
        <location evidence="1">Cytoplasm</location>
    </subcellularLocation>
    <subcellularLocation>
        <location evidence="1">Nucleus</location>
    </subcellularLocation>
</comment>
<comment type="miscellaneous">
    <text evidence="2">Present with 1500 molecules/cell in log phase SD medium.</text>
</comment>
<comment type="similarity">
    <text evidence="5">Belongs to the YAE1 family.</text>
</comment>
<protein>
    <recommendedName>
        <fullName>Protein YAE1</fullName>
    </recommendedName>
</protein>
<name>YAE1_YEAST</name>
<sequence>MSNTWDDVWASDSDVETERSPDLVKLRENHSKRGYLDGIVSSKEEKLQEGFNDGFPTGAKLGKQVGIIMGILLGLRTRFGDEDEDLSKAYIDAQKELRINKVLSKSIFDPNFDLQEKHPLITKWTDIANTYCEKYHVPSIQ</sequence>
<accession>P47118</accession>
<accession>D6VWN8</accession>
<proteinExistence type="evidence at protein level"/>
<dbReference type="EMBL" id="Z49567">
    <property type="protein sequence ID" value="CAA89595.1"/>
    <property type="molecule type" value="Genomic_DNA"/>
</dbReference>
<dbReference type="EMBL" id="L47993">
    <property type="protein sequence ID" value="AAB39293.1"/>
    <property type="molecule type" value="Genomic_DNA"/>
</dbReference>
<dbReference type="EMBL" id="AY557892">
    <property type="protein sequence ID" value="AAS56218.1"/>
    <property type="molecule type" value="Genomic_DNA"/>
</dbReference>
<dbReference type="EMBL" id="BK006943">
    <property type="protein sequence ID" value="DAA08854.1"/>
    <property type="molecule type" value="Genomic_DNA"/>
</dbReference>
<dbReference type="PIR" id="S57086">
    <property type="entry name" value="S57086"/>
</dbReference>
<dbReference type="RefSeq" id="NP_012601.1">
    <property type="nucleotide sequence ID" value="NM_001181725.1"/>
</dbReference>
<dbReference type="SMR" id="P47118"/>
<dbReference type="BioGRID" id="33824">
    <property type="interactions" value="55"/>
</dbReference>
<dbReference type="DIP" id="DIP-5706N"/>
<dbReference type="FunCoup" id="P47118">
    <property type="interactions" value="13"/>
</dbReference>
<dbReference type="IntAct" id="P47118">
    <property type="interactions" value="4"/>
</dbReference>
<dbReference type="MINT" id="P47118"/>
<dbReference type="STRING" id="4932.YJR067C"/>
<dbReference type="iPTMnet" id="P47118"/>
<dbReference type="PaxDb" id="4932-YJR067C"/>
<dbReference type="PeptideAtlas" id="P47118"/>
<dbReference type="EnsemblFungi" id="YJR067C_mRNA">
    <property type="protein sequence ID" value="YJR067C"/>
    <property type="gene ID" value="YJR067C"/>
</dbReference>
<dbReference type="GeneID" id="853530"/>
<dbReference type="KEGG" id="sce:YJR067C"/>
<dbReference type="AGR" id="SGD:S000003828"/>
<dbReference type="SGD" id="S000003828">
    <property type="gene designation" value="YAE1"/>
</dbReference>
<dbReference type="VEuPathDB" id="FungiDB:YJR067C"/>
<dbReference type="eggNOG" id="KOG4774">
    <property type="taxonomic scope" value="Eukaryota"/>
</dbReference>
<dbReference type="HOGENOM" id="CLU_066684_2_0_1"/>
<dbReference type="InParanoid" id="P47118"/>
<dbReference type="OMA" id="CKNNEAP"/>
<dbReference type="OrthoDB" id="20086at2759"/>
<dbReference type="BioCyc" id="YEAST:G3O-31700-MONOMER"/>
<dbReference type="BioGRID-ORCS" id="853530">
    <property type="hits" value="7 hits in 10 CRISPR screens"/>
</dbReference>
<dbReference type="PRO" id="PR:P47118"/>
<dbReference type="Proteomes" id="UP000002311">
    <property type="component" value="Chromosome X"/>
</dbReference>
<dbReference type="RNAct" id="P47118">
    <property type="molecule type" value="protein"/>
</dbReference>
<dbReference type="GO" id="GO:0005737">
    <property type="term" value="C:cytoplasm"/>
    <property type="evidence" value="ECO:0007005"/>
    <property type="project" value="SGD"/>
</dbReference>
<dbReference type="GO" id="GO:0005634">
    <property type="term" value="C:nucleus"/>
    <property type="evidence" value="ECO:0007005"/>
    <property type="project" value="SGD"/>
</dbReference>
<dbReference type="GO" id="GO:0062092">
    <property type="term" value="C:Yae1-Lto1 complex"/>
    <property type="evidence" value="ECO:0000314"/>
    <property type="project" value="SGD"/>
</dbReference>
<dbReference type="GO" id="GO:0051604">
    <property type="term" value="P:protein maturation"/>
    <property type="evidence" value="ECO:0000314"/>
    <property type="project" value="UniProtKB"/>
</dbReference>
<dbReference type="InterPro" id="IPR019191">
    <property type="entry name" value="Essential_protein_Yae1_N"/>
</dbReference>
<dbReference type="InterPro" id="IPR038881">
    <property type="entry name" value="Yae1-like"/>
</dbReference>
<dbReference type="PANTHER" id="PTHR18829">
    <property type="entry name" value="PROTEIN YAE1 HOMOLOG"/>
    <property type="match status" value="1"/>
</dbReference>
<dbReference type="PANTHER" id="PTHR18829:SF0">
    <property type="entry name" value="PROTEIN YAE1 HOMOLOG"/>
    <property type="match status" value="1"/>
</dbReference>
<dbReference type="Pfam" id="PF09811">
    <property type="entry name" value="Yae1_N"/>
    <property type="match status" value="1"/>
</dbReference>
<gene>
    <name type="primary">YAE1</name>
    <name type="ordered locus">YJR067C</name>
    <name type="ORF">J1805</name>
</gene>
<keyword id="KW-0963">Cytoplasm</keyword>
<keyword id="KW-0539">Nucleus</keyword>
<keyword id="KW-1185">Reference proteome</keyword>
<evidence type="ECO:0000269" key="1">
    <source>
    </source>
</evidence>
<evidence type="ECO:0000269" key="2">
    <source>
    </source>
</evidence>
<evidence type="ECO:0000269" key="3">
    <source>
    </source>
</evidence>
<evidence type="ECO:0000269" key="4">
    <source>
    </source>
</evidence>
<evidence type="ECO:0000305" key="5"/>
<feature type="chain" id="PRO_0000203099" description="Protein YAE1">
    <location>
        <begin position="1"/>
        <end position="141"/>
    </location>
</feature>
<feature type="region of interest" description="deca-GX3 motif; required for interaction with LTO1" evidence="4">
    <location>
        <begin position="34"/>
        <end position="74"/>
    </location>
</feature>
<reference key="1">
    <citation type="journal article" date="1996" name="Yeast">
        <title>Analysis of a 62 kb DNA sequence of chromosome X reveals 36 open reading frames and a gene cluster with a counterpart on chromosome XI.</title>
        <authorList>
            <person name="Huang M.-E."/>
            <person name="Manus V."/>
            <person name="Chuat J.-C."/>
            <person name="Galibert F."/>
        </authorList>
    </citation>
    <scope>NUCLEOTIDE SEQUENCE [GENOMIC DNA]</scope>
    <source>
        <strain>ATCC 204508 / S288c</strain>
    </source>
</reference>
<reference key="2">
    <citation type="journal article" date="1996" name="EMBO J.">
        <title>Complete nucleotide sequence of Saccharomyces cerevisiae chromosome X.</title>
        <authorList>
            <person name="Galibert F."/>
            <person name="Alexandraki D."/>
            <person name="Baur A."/>
            <person name="Boles E."/>
            <person name="Chalwatzis N."/>
            <person name="Chuat J.-C."/>
            <person name="Coster F."/>
            <person name="Cziepluch C."/>
            <person name="de Haan M."/>
            <person name="Domdey H."/>
            <person name="Durand P."/>
            <person name="Entian K.-D."/>
            <person name="Gatius M."/>
            <person name="Goffeau A."/>
            <person name="Grivell L.A."/>
            <person name="Hennemann A."/>
            <person name="Herbert C.J."/>
            <person name="Heumann K."/>
            <person name="Hilger F."/>
            <person name="Hollenberg C.P."/>
            <person name="Huang M.-E."/>
            <person name="Jacq C."/>
            <person name="Jauniaux J.-C."/>
            <person name="Katsoulou C."/>
            <person name="Kirchrath L."/>
            <person name="Kleine K."/>
            <person name="Kordes E."/>
            <person name="Koetter P."/>
            <person name="Liebl S."/>
            <person name="Louis E.J."/>
            <person name="Manus V."/>
            <person name="Mewes H.-W."/>
            <person name="Miosga T."/>
            <person name="Obermaier B."/>
            <person name="Perea J."/>
            <person name="Pohl T.M."/>
            <person name="Portetelle D."/>
            <person name="Pujol A."/>
            <person name="Purnelle B."/>
            <person name="Ramezani Rad M."/>
            <person name="Rasmussen S.W."/>
            <person name="Rose M."/>
            <person name="Rossau R."/>
            <person name="Schaaff-Gerstenschlaeger I."/>
            <person name="Smits P.H.M."/>
            <person name="Scarcez T."/>
            <person name="Soriano N."/>
            <person name="To Van D."/>
            <person name="Tzermia M."/>
            <person name="Van Broekhoven A."/>
            <person name="Vandenbol M."/>
            <person name="Wedler H."/>
            <person name="von Wettstein D."/>
            <person name="Wambutt R."/>
            <person name="Zagulski M."/>
            <person name="Zollner A."/>
            <person name="Karpfinger-Hartl L."/>
        </authorList>
    </citation>
    <scope>NUCLEOTIDE SEQUENCE [LARGE SCALE GENOMIC DNA]</scope>
    <source>
        <strain>ATCC 204508 / S288c</strain>
    </source>
</reference>
<reference key="3">
    <citation type="journal article" date="2014" name="G3 (Bethesda)">
        <title>The reference genome sequence of Saccharomyces cerevisiae: Then and now.</title>
        <authorList>
            <person name="Engel S.R."/>
            <person name="Dietrich F.S."/>
            <person name="Fisk D.G."/>
            <person name="Binkley G."/>
            <person name="Balakrishnan R."/>
            <person name="Costanzo M.C."/>
            <person name="Dwight S.S."/>
            <person name="Hitz B.C."/>
            <person name="Karra K."/>
            <person name="Nash R.S."/>
            <person name="Weng S."/>
            <person name="Wong E.D."/>
            <person name="Lloyd P."/>
            <person name="Skrzypek M.S."/>
            <person name="Miyasato S.R."/>
            <person name="Simison M."/>
            <person name="Cherry J.M."/>
        </authorList>
    </citation>
    <scope>GENOME REANNOTATION</scope>
    <source>
        <strain>ATCC 204508 / S288c</strain>
    </source>
</reference>
<reference key="4">
    <citation type="journal article" date="2007" name="Genome Res.">
        <title>Approaching a complete repository of sequence-verified protein-encoding clones for Saccharomyces cerevisiae.</title>
        <authorList>
            <person name="Hu Y."/>
            <person name="Rolfs A."/>
            <person name="Bhullar B."/>
            <person name="Murthy T.V.S."/>
            <person name="Zhu C."/>
            <person name="Berger M.F."/>
            <person name="Camargo A.A."/>
            <person name="Kelley F."/>
            <person name="McCarron S."/>
            <person name="Jepson D."/>
            <person name="Richardson A."/>
            <person name="Raphael J."/>
            <person name="Moreira D."/>
            <person name="Taycher E."/>
            <person name="Zuo D."/>
            <person name="Mohr S."/>
            <person name="Kane M.F."/>
            <person name="Williamson J."/>
            <person name="Simpson A.J.G."/>
            <person name="Bulyk M.L."/>
            <person name="Harlow E."/>
            <person name="Marsischky G."/>
            <person name="Kolodner R.D."/>
            <person name="LaBaer J."/>
        </authorList>
    </citation>
    <scope>NUCLEOTIDE SEQUENCE [GENOMIC DNA]</scope>
    <source>
        <strain>ATCC 204508 / S288c</strain>
    </source>
</reference>
<reference key="5">
    <citation type="journal article" date="2003" name="Mol. Cell">
        <title>Assigning function to yeast proteins by integration of technologies.</title>
        <authorList>
            <person name="Hazbun T.R."/>
            <person name="Malmstroem L."/>
            <person name="Anderson S."/>
            <person name="Graczyk B.J."/>
            <person name="Fox B."/>
            <person name="Riffle M."/>
            <person name="Sundin B.A."/>
            <person name="Aranda J.D."/>
            <person name="McDonald W.H."/>
            <person name="Chiu C.-H."/>
            <person name="Snydsman B.E."/>
            <person name="Bradley P."/>
            <person name="Muller E.G.D."/>
            <person name="Fields S."/>
            <person name="Baker D."/>
            <person name="Yates J.R. III"/>
            <person name="Davis T.N."/>
        </authorList>
    </citation>
    <scope>IDENTIFICATION BY MASS SPECTROMETRY</scope>
</reference>
<reference key="6">
    <citation type="journal article" date="2003" name="Nature">
        <title>Global analysis of protein localization in budding yeast.</title>
        <authorList>
            <person name="Huh W.-K."/>
            <person name="Falvo J.V."/>
            <person name="Gerke L.C."/>
            <person name="Carroll A.S."/>
            <person name="Howson R.W."/>
            <person name="Weissman J.S."/>
            <person name="O'Shea E.K."/>
        </authorList>
    </citation>
    <scope>SUBCELLULAR LOCATION [LARGE SCALE ANALYSIS]</scope>
</reference>
<reference key="7">
    <citation type="journal article" date="2003" name="Nature">
        <title>Global analysis of protein expression in yeast.</title>
        <authorList>
            <person name="Ghaemmaghami S."/>
            <person name="Huh W.-K."/>
            <person name="Bower K."/>
            <person name="Howson R.W."/>
            <person name="Belle A."/>
            <person name="Dephoure N."/>
            <person name="O'Shea E.K."/>
            <person name="Weissman J.S."/>
        </authorList>
    </citation>
    <scope>LEVEL OF PROTEIN EXPRESSION [LARGE SCALE ANALYSIS]</scope>
</reference>
<reference key="8">
    <citation type="journal article" date="2014" name="Oncogene">
        <title>The function of ORAOV1/LTO1, a gene that is overexpressed frequently in cancer: essential roles in the function and biogenesis of the ribosome.</title>
        <authorList>
            <person name="Zhai C."/>
            <person name="Li Y."/>
            <person name="Mascarenhas C."/>
            <person name="Lin Q."/>
            <person name="Li K."/>
            <person name="Vyrides I."/>
            <person name="Grant C.M."/>
            <person name="Panaretou B."/>
        </authorList>
    </citation>
    <scope>INTERACTION WITH LTO1 AND RLI1</scope>
</reference>
<reference key="9">
    <citation type="journal article" date="2015" name="Elife">
        <title>The deca-GX3 proteins Yae1-Lto1 function as adaptors recruiting the ABC protein Rli1 for iron-sulfur cluster insertion.</title>
        <authorList>
            <person name="Paul V.D."/>
            <person name="Muehlenhoff U."/>
            <person name="Stuempfig M."/>
            <person name="Seebacher J."/>
            <person name="Kugler K.G."/>
            <person name="Renicke C."/>
            <person name="Taxis C."/>
            <person name="Gavin A.C."/>
            <person name="Pierik A.J."/>
            <person name="Lill R."/>
        </authorList>
    </citation>
    <scope>FUNCTION</scope>
    <scope>INTERACTION WITH LTO1 AND RLI1</scope>
</reference>